<organism>
    <name type="scientific">Yersinia pestis</name>
    <dbReference type="NCBI Taxonomy" id="632"/>
    <lineage>
        <taxon>Bacteria</taxon>
        <taxon>Pseudomonadati</taxon>
        <taxon>Pseudomonadota</taxon>
        <taxon>Gammaproteobacteria</taxon>
        <taxon>Enterobacterales</taxon>
        <taxon>Yersiniaceae</taxon>
        <taxon>Yersinia</taxon>
    </lineage>
</organism>
<sequence length="186" mass="20745">MQPTHTLTRLTVIGKLIIASSFFLSLAVQAQQCGQTAPLINERLSYMKDVAGYKAENHLPIEDRIQEEKVINSAMAQAESLGLNGESIKPLMVAQINAAKAIQYRYRADWLSQPEPGWQPKPLDDVRANIGELSTKILEQIAEELKTCKPAEMGDKAHFINTIRQHNLTSADVEAIFSTFNQVKLK</sequence>
<evidence type="ECO:0000250" key="1">
    <source>
        <dbReference type="UniProtKB" id="P9WIB9"/>
    </source>
</evidence>
<evidence type="ECO:0000255" key="2"/>
<evidence type="ECO:0000255" key="3">
    <source>
        <dbReference type="PROSITE-ProRule" id="PRU00515"/>
    </source>
</evidence>
<evidence type="ECO:0000269" key="4">
    <source>
    </source>
</evidence>
<evidence type="ECO:0000303" key="5">
    <source>
    </source>
</evidence>
<evidence type="ECO:0007744" key="6">
    <source>
        <dbReference type="PDB" id="2GBB"/>
    </source>
</evidence>
<evidence type="ECO:0007829" key="7">
    <source>
        <dbReference type="PDB" id="2GBB"/>
    </source>
</evidence>
<accession>Q7CHH5</accession>
<accession>Q74VQ2</accession>
<gene>
    <name type="primary">pheA2</name>
    <name type="ordered locus">y2828</name>
    <name type="ordered locus">YP_1243</name>
    <name type="ordered locus">YPO1353</name>
</gene>
<name>SCMU_YERPE</name>
<protein>
    <recommendedName>
        <fullName evidence="5">Secreted chorismate mutase</fullName>
        <shortName evidence="5">CM</shortName>
        <ecNumber evidence="4">5.4.99.5</ecNumber>
    </recommendedName>
    <alternativeName>
        <fullName evidence="5">*YpCM</fullName>
    </alternativeName>
</protein>
<dbReference type="EC" id="5.4.99.5" evidence="4"/>
<dbReference type="EMBL" id="AE009952">
    <property type="protein sequence ID" value="AAM86379.1"/>
    <property type="molecule type" value="Genomic_DNA"/>
</dbReference>
<dbReference type="EMBL" id="AE017042">
    <property type="protein sequence ID" value="AAS61486.1"/>
    <property type="molecule type" value="Genomic_DNA"/>
</dbReference>
<dbReference type="EMBL" id="AL590842">
    <property type="protein sequence ID" value="CAL20005.1"/>
    <property type="molecule type" value="Genomic_DNA"/>
</dbReference>
<dbReference type="PIR" id="AC0165">
    <property type="entry name" value="AC0165"/>
</dbReference>
<dbReference type="RefSeq" id="WP_002211366.1">
    <property type="nucleotide sequence ID" value="NZ_WUCM01000027.1"/>
</dbReference>
<dbReference type="RefSeq" id="YP_002346376.1">
    <property type="nucleotide sequence ID" value="NC_003143.1"/>
</dbReference>
<dbReference type="PDB" id="2GBB">
    <property type="method" value="X-ray"/>
    <property type="resolution" value="2.10 A"/>
    <property type="chains" value="A/B/C/D=31-186"/>
</dbReference>
<dbReference type="PDBsum" id="2GBB"/>
<dbReference type="SMR" id="Q7CHH5"/>
<dbReference type="STRING" id="214092.YPO1353"/>
<dbReference type="PaxDb" id="214092-YPO1353"/>
<dbReference type="DNASU" id="1147775"/>
<dbReference type="EnsemblBacteria" id="AAS61486">
    <property type="protein sequence ID" value="AAS61486"/>
    <property type="gene ID" value="YP_1243"/>
</dbReference>
<dbReference type="KEGG" id="ype:YPO1353"/>
<dbReference type="KEGG" id="ypk:y2828"/>
<dbReference type="KEGG" id="ypm:YP_1243"/>
<dbReference type="PATRIC" id="fig|214092.21.peg.1671"/>
<dbReference type="eggNOG" id="COG1605">
    <property type="taxonomic scope" value="Bacteria"/>
</dbReference>
<dbReference type="HOGENOM" id="CLU_118625_0_0_6"/>
<dbReference type="OMA" id="WCLPLHA"/>
<dbReference type="OrthoDB" id="8445094at2"/>
<dbReference type="BRENDA" id="5.4.99.5">
    <property type="organism ID" value="4559"/>
</dbReference>
<dbReference type="SABIO-RK" id="Q7CHH5"/>
<dbReference type="UniPathway" id="UPA00120">
    <property type="reaction ID" value="UER00203"/>
</dbReference>
<dbReference type="EvolutionaryTrace" id="Q7CHH5"/>
<dbReference type="Proteomes" id="UP000000815">
    <property type="component" value="Chromosome"/>
</dbReference>
<dbReference type="Proteomes" id="UP000001019">
    <property type="component" value="Chromosome"/>
</dbReference>
<dbReference type="Proteomes" id="UP000002490">
    <property type="component" value="Chromosome"/>
</dbReference>
<dbReference type="GO" id="GO:0042597">
    <property type="term" value="C:periplasmic space"/>
    <property type="evidence" value="ECO:0007669"/>
    <property type="project" value="UniProtKB-SubCell"/>
</dbReference>
<dbReference type="GO" id="GO:0004106">
    <property type="term" value="F:chorismate mutase activity"/>
    <property type="evidence" value="ECO:0000314"/>
    <property type="project" value="UniProtKB"/>
</dbReference>
<dbReference type="GO" id="GO:0046417">
    <property type="term" value="P:chorismate metabolic process"/>
    <property type="evidence" value="ECO:0000314"/>
    <property type="project" value="UniProtKB"/>
</dbReference>
<dbReference type="GO" id="GO:0009697">
    <property type="term" value="P:salicylic acid biosynthetic process"/>
    <property type="evidence" value="ECO:0000318"/>
    <property type="project" value="GO_Central"/>
</dbReference>
<dbReference type="Gene3D" id="1.20.59.10">
    <property type="entry name" value="Chorismate mutase"/>
    <property type="match status" value="1"/>
</dbReference>
<dbReference type="InterPro" id="IPR036263">
    <property type="entry name" value="Chorismate_II_sf"/>
</dbReference>
<dbReference type="InterPro" id="IPR051331">
    <property type="entry name" value="Chorismate_mutase-related"/>
</dbReference>
<dbReference type="InterPro" id="IPR008240">
    <property type="entry name" value="Chorismate_mutase_periplasmic"/>
</dbReference>
<dbReference type="InterPro" id="IPR036979">
    <property type="entry name" value="CM_dom_sf"/>
</dbReference>
<dbReference type="InterPro" id="IPR002701">
    <property type="entry name" value="CM_II_prokaryot"/>
</dbReference>
<dbReference type="NCBIfam" id="TIGR01806">
    <property type="entry name" value="CM_mono2"/>
    <property type="match status" value="1"/>
</dbReference>
<dbReference type="NCBIfam" id="NF005965">
    <property type="entry name" value="PRK08055.1"/>
    <property type="match status" value="1"/>
</dbReference>
<dbReference type="PANTHER" id="PTHR38041">
    <property type="entry name" value="CHORISMATE MUTASE"/>
    <property type="match status" value="1"/>
</dbReference>
<dbReference type="PANTHER" id="PTHR38041:SF2">
    <property type="entry name" value="SECRETED CHORISMATE MUTASE"/>
    <property type="match status" value="1"/>
</dbReference>
<dbReference type="Pfam" id="PF01817">
    <property type="entry name" value="CM_2"/>
    <property type="match status" value="1"/>
</dbReference>
<dbReference type="PIRSF" id="PIRSF026640">
    <property type="entry name" value="Peripl_chor_mut"/>
    <property type="match status" value="1"/>
</dbReference>
<dbReference type="SMART" id="SM00830">
    <property type="entry name" value="CM_2"/>
    <property type="match status" value="1"/>
</dbReference>
<dbReference type="SUPFAM" id="SSF48600">
    <property type="entry name" value="Chorismate mutase II"/>
    <property type="match status" value="1"/>
</dbReference>
<dbReference type="PROSITE" id="PS51168">
    <property type="entry name" value="CHORISMATE_MUT_2"/>
    <property type="match status" value="1"/>
</dbReference>
<keyword id="KW-0002">3D-structure</keyword>
<keyword id="KW-1015">Disulfide bond</keyword>
<keyword id="KW-0413">Isomerase</keyword>
<keyword id="KW-0574">Periplasm</keyword>
<keyword id="KW-1185">Reference proteome</keyword>
<keyword id="KW-0732">Signal</keyword>
<proteinExistence type="evidence at protein level"/>
<comment type="function">
    <text evidence="4">Catalyzes the Claisen rearrangement of chorismate to prephenate. May play some role in the pathogenicity.</text>
</comment>
<comment type="catalytic activity">
    <reaction evidence="4">
        <text>chorismate = prephenate</text>
        <dbReference type="Rhea" id="RHEA:13897"/>
        <dbReference type="ChEBI" id="CHEBI:29748"/>
        <dbReference type="ChEBI" id="CHEBI:29934"/>
        <dbReference type="EC" id="5.4.99.5"/>
    </reaction>
    <physiologicalReaction direction="left-to-right" evidence="4">
        <dbReference type="Rhea" id="RHEA:13898"/>
    </physiologicalReaction>
</comment>
<comment type="biophysicochemical properties">
    <kinetics>
        <KM evidence="4">500 uM for chorismate (at 30 degrees Celsius and at pH 7.5)</KM>
        <text evidence="4">kcat is 70 sec(-1).</text>
    </kinetics>
</comment>
<comment type="pathway">
    <text>Metabolic intermediate biosynthesis; prephenate biosynthesis; prephenate from chorismate: step 1/1.</text>
</comment>
<comment type="subunit">
    <text evidence="4">Homodimer.</text>
</comment>
<comment type="subcellular location">
    <subcellularLocation>
        <location evidence="4">Periplasm</location>
    </subcellularLocation>
</comment>
<reference key="1">
    <citation type="journal article" date="2004" name="DNA Res.">
        <title>Complete genome sequence of Yersinia pestis strain 91001, an isolate avirulent to humans.</title>
        <authorList>
            <person name="Song Y."/>
            <person name="Tong Z."/>
            <person name="Wang J."/>
            <person name="Wang L."/>
            <person name="Guo Z."/>
            <person name="Han Y."/>
            <person name="Zhang J."/>
            <person name="Pei D."/>
            <person name="Zhou D."/>
            <person name="Qin H."/>
            <person name="Pang X."/>
            <person name="Han Y."/>
            <person name="Zhai J."/>
            <person name="Li M."/>
            <person name="Cui B."/>
            <person name="Qi Z."/>
            <person name="Jin L."/>
            <person name="Dai R."/>
            <person name="Chen F."/>
            <person name="Li S."/>
            <person name="Ye C."/>
            <person name="Du Z."/>
            <person name="Lin W."/>
            <person name="Wang J."/>
            <person name="Yu J."/>
            <person name="Yang H."/>
            <person name="Wang J."/>
            <person name="Huang P."/>
            <person name="Yang R."/>
        </authorList>
    </citation>
    <scope>NUCLEOTIDE SEQUENCE [LARGE SCALE GENOMIC DNA]</scope>
    <source>
        <strain>91001 / Biovar Mediaevalis</strain>
    </source>
</reference>
<reference key="2">
    <citation type="journal article" date="2002" name="J. Bacteriol.">
        <title>Genome sequence of Yersinia pestis KIM.</title>
        <authorList>
            <person name="Deng W."/>
            <person name="Burland V."/>
            <person name="Plunkett G. III"/>
            <person name="Boutin A."/>
            <person name="Mayhew G.F."/>
            <person name="Liss P."/>
            <person name="Perna N.T."/>
            <person name="Rose D.J."/>
            <person name="Mau B."/>
            <person name="Zhou S."/>
            <person name="Schwartz D.C."/>
            <person name="Fetherston J.D."/>
            <person name="Lindler L.E."/>
            <person name="Brubaker R.R."/>
            <person name="Plano G.V."/>
            <person name="Straley S.C."/>
            <person name="McDonough K.A."/>
            <person name="Nilles M.L."/>
            <person name="Matson J.S."/>
            <person name="Blattner F.R."/>
            <person name="Perry R.D."/>
        </authorList>
    </citation>
    <scope>NUCLEOTIDE SEQUENCE [LARGE SCALE GENOMIC DNA]</scope>
    <source>
        <strain>KIM10+ / Biovar Mediaevalis</strain>
    </source>
</reference>
<reference key="3">
    <citation type="journal article" date="2001" name="Nature">
        <title>Genome sequence of Yersinia pestis, the causative agent of plague.</title>
        <authorList>
            <person name="Parkhill J."/>
            <person name="Wren B.W."/>
            <person name="Thomson N.R."/>
            <person name="Titball R.W."/>
            <person name="Holden M.T.G."/>
            <person name="Prentice M.B."/>
            <person name="Sebaihia M."/>
            <person name="James K.D."/>
            <person name="Churcher C.M."/>
            <person name="Mungall K.L."/>
            <person name="Baker S."/>
            <person name="Basham D."/>
            <person name="Bentley S.D."/>
            <person name="Brooks K."/>
            <person name="Cerdeno-Tarraga A.-M."/>
            <person name="Chillingworth T."/>
            <person name="Cronin A."/>
            <person name="Davies R.M."/>
            <person name="Davis P."/>
            <person name="Dougan G."/>
            <person name="Feltwell T."/>
            <person name="Hamlin N."/>
            <person name="Holroyd S."/>
            <person name="Jagels K."/>
            <person name="Karlyshev A.V."/>
            <person name="Leather S."/>
            <person name="Moule S."/>
            <person name="Oyston P.C.F."/>
            <person name="Quail M.A."/>
            <person name="Rutherford K.M."/>
            <person name="Simmonds M."/>
            <person name="Skelton J."/>
            <person name="Stevens K."/>
            <person name="Whitehead S."/>
            <person name="Barrell B.G."/>
        </authorList>
    </citation>
    <scope>NUCLEOTIDE SEQUENCE [LARGE SCALE GENOMIC DNA]</scope>
    <source>
        <strain>CO-92 / Biovar Orientalis</strain>
    </source>
</reference>
<reference evidence="6" key="4">
    <citation type="journal article" date="2008" name="FEBS J.">
        <title>A comparative biochemical and structural analysis of the intracellular chorismate mutase (Rv0948c) from Mycobacterium tuberculosis H(37)R(v) and the secreted chorismate mutase (y2828) from Yersinia pestis.</title>
        <authorList>
            <person name="Kim S.K."/>
            <person name="Reddy S.K."/>
            <person name="Nelson B.C."/>
            <person name="Robinson H."/>
            <person name="Reddy P.T."/>
            <person name="Ladner J.E."/>
        </authorList>
    </citation>
    <scope>X-RAY CRYSTALLOGRAPHY (2.0 ANGSTROMS) OF 16-105 IN COMPLEX WITH SUBSTRATE ANALOGS</scope>
    <scope>FUNCTION AS A CHORISMATE MUTASE</scope>
    <scope>CATALYTIC ACTIVITY</scope>
    <scope>BIOPHYSICOCHEMICAL PROPERTIES</scope>
    <scope>SUBCELLULAR LOCATION</scope>
    <scope>SUBUNIT</scope>
    <scope>DISULFIDE BOND</scope>
    <source>
        <strain>KIM10+ / Biovar Mediaevalis</strain>
    </source>
</reference>
<feature type="signal peptide" evidence="2">
    <location>
        <begin position="1"/>
        <end position="30"/>
    </location>
</feature>
<feature type="chain" id="PRO_0000414907" description="Secreted chorismate mutase">
    <location>
        <begin position="31"/>
        <end position="186"/>
    </location>
</feature>
<feature type="domain" description="Chorismate mutase" evidence="3">
    <location>
        <begin position="31"/>
        <end position="107"/>
    </location>
</feature>
<feature type="binding site" evidence="1">
    <location>
        <position position="43"/>
    </location>
    <ligand>
        <name>substrate</name>
    </ligand>
</feature>
<feature type="binding site" evidence="1">
    <location>
        <position position="54"/>
    </location>
    <ligand>
        <name>substrate</name>
    </ligand>
</feature>
<feature type="binding site" evidence="1">
    <location>
        <position position="63"/>
    </location>
    <ligand>
        <name>substrate</name>
    </ligand>
</feature>
<feature type="binding site" evidence="1">
    <location>
        <begin position="99"/>
        <end position="103"/>
    </location>
    <ligand>
        <name>substrate</name>
    </ligand>
</feature>
<feature type="binding site" evidence="1">
    <location>
        <position position="127"/>
    </location>
    <ligand>
        <name>substrate</name>
    </ligand>
</feature>
<feature type="disulfide bond" evidence="4 6">
    <location>
        <begin position="33"/>
        <end position="148"/>
    </location>
</feature>
<feature type="helix" evidence="7">
    <location>
        <begin position="37"/>
        <end position="44"/>
    </location>
</feature>
<feature type="helix" evidence="7">
    <location>
        <begin position="47"/>
        <end position="56"/>
    </location>
</feature>
<feature type="helix" evidence="7">
    <location>
        <begin position="64"/>
        <end position="80"/>
    </location>
</feature>
<feature type="helix" evidence="7">
    <location>
        <begin position="85"/>
        <end position="112"/>
    </location>
</feature>
<feature type="helix" evidence="7">
    <location>
        <begin position="123"/>
        <end position="147"/>
    </location>
</feature>
<feature type="turn" evidence="7">
    <location>
        <begin position="150"/>
        <end position="152"/>
    </location>
</feature>
<feature type="helix" evidence="7">
    <location>
        <begin position="156"/>
        <end position="162"/>
    </location>
</feature>
<feature type="helix" evidence="7">
    <location>
        <begin position="170"/>
        <end position="180"/>
    </location>
</feature>